<gene>
    <name type="primary">TAS2R43</name>
</gene>
<sequence length="308" mass="35353">MITFLPIIFSILVVFTFVIGNFANGFIALVNSIEWVKRQKISFADQILTALAVSRVGLLWILLLNWYSTVLNPAFYSVEVRTIAYNLWAVINHFSNWLATSLSIFYLLKIANFSNLIFLHLRRRVKSVVLVILWGPLLFLVCHLFVVNMNEIIQTKEYEGNMTWKSKLRSAMYLSNTTVTILANLVPFILTLISFLLLICSLCKHLKKMQLRDKGSQDPSTKVHIKALQTVISLSLCAIYFLSIMISSWSLGRVENKAIFMFCKAIRFSYPSAHAFILIWGNKKLKQTLLSVLWNVRYCVKGQKLQSP</sequence>
<reference key="1">
    <citation type="journal article" date="2005" name="Mol. Biol. Evol.">
        <title>Evolution of bitter taste receptors in humans and apes.</title>
        <authorList>
            <person name="Fischer A."/>
            <person name="Gilad Y."/>
            <person name="Man O."/>
            <person name="Paeaebo S."/>
        </authorList>
    </citation>
    <scope>NUCLEOTIDE SEQUENCE [GENOMIC DNA]</scope>
</reference>
<evidence type="ECO:0000250" key="1"/>
<evidence type="ECO:0000255" key="2"/>
<evidence type="ECO:0000305" key="3"/>
<accession>Q645T3</accession>
<name>T2R43_MACMU</name>
<organism>
    <name type="scientific">Macaca mulatta</name>
    <name type="common">Rhesus macaque</name>
    <dbReference type="NCBI Taxonomy" id="9544"/>
    <lineage>
        <taxon>Eukaryota</taxon>
        <taxon>Metazoa</taxon>
        <taxon>Chordata</taxon>
        <taxon>Craniata</taxon>
        <taxon>Vertebrata</taxon>
        <taxon>Euteleostomi</taxon>
        <taxon>Mammalia</taxon>
        <taxon>Eutheria</taxon>
        <taxon>Euarchontoglires</taxon>
        <taxon>Primates</taxon>
        <taxon>Haplorrhini</taxon>
        <taxon>Catarrhini</taxon>
        <taxon>Cercopithecidae</taxon>
        <taxon>Cercopithecinae</taxon>
        <taxon>Macaca</taxon>
    </lineage>
</organism>
<proteinExistence type="inferred from homology"/>
<dbReference type="EMBL" id="AY725007">
    <property type="protein sequence ID" value="AAU21186.1"/>
    <property type="molecule type" value="Genomic_DNA"/>
</dbReference>
<dbReference type="SMR" id="Q645T3"/>
<dbReference type="GlyCosmos" id="Q645T3">
    <property type="glycosylation" value="2 sites, No reported glycans"/>
</dbReference>
<dbReference type="PaxDb" id="9544-ENSMMUP00000027633"/>
<dbReference type="eggNOG" id="ENOG502TE6U">
    <property type="taxonomic scope" value="Eukaryota"/>
</dbReference>
<dbReference type="InParanoid" id="Q645T3"/>
<dbReference type="Proteomes" id="UP000006718">
    <property type="component" value="Unassembled WGS sequence"/>
</dbReference>
<dbReference type="GO" id="GO:0060170">
    <property type="term" value="C:ciliary membrane"/>
    <property type="evidence" value="ECO:0007669"/>
    <property type="project" value="UniProtKB-SubCell"/>
</dbReference>
<dbReference type="GO" id="GO:0016020">
    <property type="term" value="C:membrane"/>
    <property type="evidence" value="ECO:0000318"/>
    <property type="project" value="GO_Central"/>
</dbReference>
<dbReference type="GO" id="GO:0031514">
    <property type="term" value="C:motile cilium"/>
    <property type="evidence" value="ECO:0000250"/>
    <property type="project" value="UniProtKB"/>
</dbReference>
<dbReference type="GO" id="GO:0033038">
    <property type="term" value="F:bitter taste receptor activity"/>
    <property type="evidence" value="ECO:0000318"/>
    <property type="project" value="GO_Central"/>
</dbReference>
<dbReference type="GO" id="GO:0004930">
    <property type="term" value="F:G protein-coupled receptor activity"/>
    <property type="evidence" value="ECO:0007669"/>
    <property type="project" value="UniProtKB-KW"/>
</dbReference>
<dbReference type="GO" id="GO:0001580">
    <property type="term" value="P:detection of chemical stimulus involved in sensory perception of bitter taste"/>
    <property type="evidence" value="ECO:0000318"/>
    <property type="project" value="GO_Central"/>
</dbReference>
<dbReference type="CDD" id="cd15027">
    <property type="entry name" value="7tm_TAS2R43-like"/>
    <property type="match status" value="1"/>
</dbReference>
<dbReference type="FunFam" id="1.20.1070.10:FF:000042">
    <property type="entry name" value="Taste receptor type 2 member 7"/>
    <property type="match status" value="1"/>
</dbReference>
<dbReference type="Gene3D" id="1.20.1070.10">
    <property type="entry name" value="Rhodopsin 7-helix transmembrane proteins"/>
    <property type="match status" value="1"/>
</dbReference>
<dbReference type="InterPro" id="IPR007960">
    <property type="entry name" value="TAS2R"/>
</dbReference>
<dbReference type="PANTHER" id="PTHR11394">
    <property type="entry name" value="TASTE RECEPTOR TYPE 2"/>
    <property type="match status" value="1"/>
</dbReference>
<dbReference type="PANTHER" id="PTHR11394:SF66">
    <property type="entry name" value="TASTE RECEPTOR TYPE 2 MEMBER 46"/>
    <property type="match status" value="1"/>
</dbReference>
<dbReference type="Pfam" id="PF05296">
    <property type="entry name" value="TAS2R"/>
    <property type="match status" value="1"/>
</dbReference>
<dbReference type="SUPFAM" id="SSF81321">
    <property type="entry name" value="Family A G protein-coupled receptor-like"/>
    <property type="match status" value="1"/>
</dbReference>
<protein>
    <recommendedName>
        <fullName>Taste receptor type 2 member 43</fullName>
        <shortName>T2R43</shortName>
    </recommendedName>
</protein>
<feature type="chain" id="PRO_0000082303" description="Taste receptor type 2 member 43">
    <location>
        <begin position="1"/>
        <end position="308"/>
    </location>
</feature>
<feature type="topological domain" description="Extracellular" evidence="2">
    <location>
        <position position="1"/>
    </location>
</feature>
<feature type="transmembrane region" description="Helical; Name=1" evidence="2">
    <location>
        <begin position="2"/>
        <end position="22"/>
    </location>
</feature>
<feature type="topological domain" description="Cytoplasmic" evidence="2">
    <location>
        <begin position="23"/>
        <end position="46"/>
    </location>
</feature>
<feature type="transmembrane region" description="Helical; Name=2" evidence="2">
    <location>
        <begin position="47"/>
        <end position="67"/>
    </location>
</feature>
<feature type="topological domain" description="Extracellular" evidence="2">
    <location>
        <begin position="68"/>
        <end position="86"/>
    </location>
</feature>
<feature type="transmembrane region" description="Helical; Name=3" evidence="2">
    <location>
        <begin position="87"/>
        <end position="107"/>
    </location>
</feature>
<feature type="topological domain" description="Cytoplasmic" evidence="2">
    <location>
        <begin position="108"/>
        <end position="126"/>
    </location>
</feature>
<feature type="transmembrane region" description="Helical; Name=4" evidence="2">
    <location>
        <begin position="127"/>
        <end position="147"/>
    </location>
</feature>
<feature type="topological domain" description="Extracellular" evidence="2">
    <location>
        <begin position="148"/>
        <end position="178"/>
    </location>
</feature>
<feature type="transmembrane region" description="Helical; Name=5" evidence="2">
    <location>
        <begin position="179"/>
        <end position="199"/>
    </location>
</feature>
<feature type="topological domain" description="Cytoplasmic" evidence="2">
    <location>
        <begin position="200"/>
        <end position="229"/>
    </location>
</feature>
<feature type="transmembrane region" description="Helical; Name=6" evidence="2">
    <location>
        <begin position="230"/>
        <end position="249"/>
    </location>
</feature>
<feature type="topological domain" description="Extracellular" evidence="2">
    <location>
        <begin position="250"/>
        <end position="258"/>
    </location>
</feature>
<feature type="transmembrane region" description="Helical; Name=7" evidence="2">
    <location>
        <begin position="259"/>
        <end position="279"/>
    </location>
</feature>
<feature type="topological domain" description="Cytoplasmic" evidence="2">
    <location>
        <begin position="280"/>
        <end position="308"/>
    </location>
</feature>
<feature type="glycosylation site" description="N-linked (GlcNAc...) asparagine" evidence="2">
    <location>
        <position position="161"/>
    </location>
</feature>
<feature type="glycosylation site" description="N-linked (GlcNAc...) asparagine" evidence="2">
    <location>
        <position position="176"/>
    </location>
</feature>
<keyword id="KW-1003">Cell membrane</keyword>
<keyword id="KW-0966">Cell projection</keyword>
<keyword id="KW-0969">Cilium</keyword>
<keyword id="KW-0297">G-protein coupled receptor</keyword>
<keyword id="KW-0325">Glycoprotein</keyword>
<keyword id="KW-0472">Membrane</keyword>
<keyword id="KW-0675">Receptor</keyword>
<keyword id="KW-1185">Reference proteome</keyword>
<keyword id="KW-0716">Sensory transduction</keyword>
<keyword id="KW-0919">Taste</keyword>
<keyword id="KW-0807">Transducer</keyword>
<keyword id="KW-0812">Transmembrane</keyword>
<keyword id="KW-1133">Transmembrane helix</keyword>
<comment type="function">
    <text evidence="1">Gustducin-coupled receptor immplicated in the perception of bitter compounds in the oral cavity and the gastrointestinal tract. Signals through PLCB2 and the calcium-regulated cation channel TRPM5. Activated by the sulfonyl amide sweeteners saccharin and acesulfame K. In airway epithelial cells, binding of bitter compounds increases the intracellular calcium ion concentration and stimulates ciliary beat frequency. May act as chemosensory receptors in airway epithelial cells to detect and eliminate potential noxious agents from the airways (By similarity).</text>
</comment>
<comment type="subcellular location">
    <subcellularLocation>
        <location>Membrane</location>
        <topology>Multi-pass membrane protein</topology>
    </subcellularLocation>
    <subcellularLocation>
        <location evidence="1">Cell projection</location>
        <location evidence="1">Cilium membrane</location>
    </subcellularLocation>
    <text evidence="1">In airway epithelial cells, localizes to motile cilia.</text>
</comment>
<comment type="miscellaneous">
    <text>Most taste cells may be activated by a limited number of bitter compounds; individual taste cells can discriminate among bitter stimuli.</text>
</comment>
<comment type="similarity">
    <text evidence="3">Belongs to the G-protein coupled receptor T2R family.</text>
</comment>